<reference key="1">
    <citation type="journal article" date="2008" name="Appl. Environ. Microbiol.">
        <title>Genome of the epsilonproteobacterial chemolithoautotroph Sulfurimonas denitrificans.</title>
        <authorList>
            <person name="Sievert S.M."/>
            <person name="Scott K.M."/>
            <person name="Klotz M.G."/>
            <person name="Chain P.S.G."/>
            <person name="Hauser L.J."/>
            <person name="Hemp J."/>
            <person name="Huegler M."/>
            <person name="Land M."/>
            <person name="Lapidus A."/>
            <person name="Larimer F.W."/>
            <person name="Lucas S."/>
            <person name="Malfatti S.A."/>
            <person name="Meyer F."/>
            <person name="Paulsen I.T."/>
            <person name="Ren Q."/>
            <person name="Simon J."/>
            <person name="Bailey K."/>
            <person name="Diaz E."/>
            <person name="Fitzpatrick K.A."/>
            <person name="Glover B."/>
            <person name="Gwatney N."/>
            <person name="Korajkic A."/>
            <person name="Long A."/>
            <person name="Mobberley J.M."/>
            <person name="Pantry S.N."/>
            <person name="Pazder G."/>
            <person name="Peterson S."/>
            <person name="Quintanilla J.D."/>
            <person name="Sprinkle R."/>
            <person name="Stephens J."/>
            <person name="Thomas P."/>
            <person name="Vaughn R."/>
            <person name="Weber M.J."/>
            <person name="Wooten L.L."/>
        </authorList>
    </citation>
    <scope>NUCLEOTIDE SEQUENCE [LARGE SCALE GENOMIC DNA]</scope>
    <source>
        <strain>ATCC 33889 / DSM 1251</strain>
    </source>
</reference>
<dbReference type="EC" id="3.6.-.-" evidence="1"/>
<dbReference type="EMBL" id="CP000153">
    <property type="protein sequence ID" value="ABB43806.1"/>
    <property type="molecule type" value="Genomic_DNA"/>
</dbReference>
<dbReference type="RefSeq" id="WP_011372160.1">
    <property type="nucleotide sequence ID" value="NC_007575.1"/>
</dbReference>
<dbReference type="SMR" id="Q30T75"/>
<dbReference type="STRING" id="326298.Suden_0526"/>
<dbReference type="KEGG" id="tdn:Suden_0526"/>
<dbReference type="eggNOG" id="COG0486">
    <property type="taxonomic scope" value="Bacteria"/>
</dbReference>
<dbReference type="HOGENOM" id="CLU_019624_4_1_7"/>
<dbReference type="OrthoDB" id="9805918at2"/>
<dbReference type="Proteomes" id="UP000002714">
    <property type="component" value="Chromosome"/>
</dbReference>
<dbReference type="GO" id="GO:0005829">
    <property type="term" value="C:cytosol"/>
    <property type="evidence" value="ECO:0007669"/>
    <property type="project" value="TreeGrafter"/>
</dbReference>
<dbReference type="GO" id="GO:0005525">
    <property type="term" value="F:GTP binding"/>
    <property type="evidence" value="ECO:0007669"/>
    <property type="project" value="UniProtKB-UniRule"/>
</dbReference>
<dbReference type="GO" id="GO:0003924">
    <property type="term" value="F:GTPase activity"/>
    <property type="evidence" value="ECO:0007669"/>
    <property type="project" value="UniProtKB-UniRule"/>
</dbReference>
<dbReference type="GO" id="GO:0046872">
    <property type="term" value="F:metal ion binding"/>
    <property type="evidence" value="ECO:0007669"/>
    <property type="project" value="UniProtKB-KW"/>
</dbReference>
<dbReference type="GO" id="GO:0030488">
    <property type="term" value="P:tRNA methylation"/>
    <property type="evidence" value="ECO:0007669"/>
    <property type="project" value="TreeGrafter"/>
</dbReference>
<dbReference type="GO" id="GO:0002098">
    <property type="term" value="P:tRNA wobble uridine modification"/>
    <property type="evidence" value="ECO:0007669"/>
    <property type="project" value="TreeGrafter"/>
</dbReference>
<dbReference type="CDD" id="cd04164">
    <property type="entry name" value="trmE"/>
    <property type="match status" value="1"/>
</dbReference>
<dbReference type="CDD" id="cd14858">
    <property type="entry name" value="TrmE_N"/>
    <property type="match status" value="1"/>
</dbReference>
<dbReference type="FunFam" id="3.40.50.300:FF:001376">
    <property type="entry name" value="tRNA modification GTPase MnmE"/>
    <property type="match status" value="1"/>
</dbReference>
<dbReference type="Gene3D" id="3.40.50.300">
    <property type="entry name" value="P-loop containing nucleotide triphosphate hydrolases"/>
    <property type="match status" value="1"/>
</dbReference>
<dbReference type="Gene3D" id="3.30.1360.120">
    <property type="entry name" value="Probable tRNA modification gtpase trme, domain 1"/>
    <property type="match status" value="1"/>
</dbReference>
<dbReference type="Gene3D" id="1.20.120.430">
    <property type="entry name" value="tRNA modification GTPase MnmE domain 2"/>
    <property type="match status" value="1"/>
</dbReference>
<dbReference type="HAMAP" id="MF_00379">
    <property type="entry name" value="GTPase_MnmE"/>
    <property type="match status" value="1"/>
</dbReference>
<dbReference type="InterPro" id="IPR031168">
    <property type="entry name" value="G_TrmE"/>
</dbReference>
<dbReference type="InterPro" id="IPR006073">
    <property type="entry name" value="GTP-bd"/>
</dbReference>
<dbReference type="InterPro" id="IPR018948">
    <property type="entry name" value="GTP-bd_TrmE_N"/>
</dbReference>
<dbReference type="InterPro" id="IPR004520">
    <property type="entry name" value="GTPase_MnmE"/>
</dbReference>
<dbReference type="InterPro" id="IPR027368">
    <property type="entry name" value="MnmE_dom2"/>
</dbReference>
<dbReference type="InterPro" id="IPR025867">
    <property type="entry name" value="MnmE_helical"/>
</dbReference>
<dbReference type="InterPro" id="IPR027417">
    <property type="entry name" value="P-loop_NTPase"/>
</dbReference>
<dbReference type="InterPro" id="IPR005225">
    <property type="entry name" value="Small_GTP-bd"/>
</dbReference>
<dbReference type="InterPro" id="IPR027266">
    <property type="entry name" value="TrmE/GcvT_dom1"/>
</dbReference>
<dbReference type="NCBIfam" id="TIGR00450">
    <property type="entry name" value="mnmE_trmE_thdF"/>
    <property type="match status" value="1"/>
</dbReference>
<dbReference type="NCBIfam" id="NF003661">
    <property type="entry name" value="PRK05291.1-3"/>
    <property type="match status" value="1"/>
</dbReference>
<dbReference type="NCBIfam" id="TIGR00231">
    <property type="entry name" value="small_GTP"/>
    <property type="match status" value="1"/>
</dbReference>
<dbReference type="PANTHER" id="PTHR42714">
    <property type="entry name" value="TRNA MODIFICATION GTPASE GTPBP3"/>
    <property type="match status" value="1"/>
</dbReference>
<dbReference type="PANTHER" id="PTHR42714:SF2">
    <property type="entry name" value="TRNA MODIFICATION GTPASE GTPBP3, MITOCHONDRIAL"/>
    <property type="match status" value="1"/>
</dbReference>
<dbReference type="Pfam" id="PF01926">
    <property type="entry name" value="MMR_HSR1"/>
    <property type="match status" value="1"/>
</dbReference>
<dbReference type="Pfam" id="PF12631">
    <property type="entry name" value="MnmE_helical"/>
    <property type="match status" value="1"/>
</dbReference>
<dbReference type="Pfam" id="PF10396">
    <property type="entry name" value="TrmE_N"/>
    <property type="match status" value="1"/>
</dbReference>
<dbReference type="PRINTS" id="PR00326">
    <property type="entry name" value="GTP1OBG"/>
</dbReference>
<dbReference type="SUPFAM" id="SSF52540">
    <property type="entry name" value="P-loop containing nucleoside triphosphate hydrolases"/>
    <property type="match status" value="1"/>
</dbReference>
<dbReference type="PROSITE" id="PS51709">
    <property type="entry name" value="G_TRME"/>
    <property type="match status" value="1"/>
</dbReference>
<keyword id="KW-0963">Cytoplasm</keyword>
<keyword id="KW-0342">GTP-binding</keyword>
<keyword id="KW-0378">Hydrolase</keyword>
<keyword id="KW-0460">Magnesium</keyword>
<keyword id="KW-0479">Metal-binding</keyword>
<keyword id="KW-0547">Nucleotide-binding</keyword>
<keyword id="KW-0630">Potassium</keyword>
<keyword id="KW-1185">Reference proteome</keyword>
<keyword id="KW-0819">tRNA processing</keyword>
<gene>
    <name evidence="1" type="primary">mnmE</name>
    <name evidence="1" type="synonym">trmE</name>
    <name type="ordered locus">Suden_0526</name>
</gene>
<sequence>MSEDTISAIATANGIGSIAIIRISGDRALEIASKITHKDNFTPRYASLSNIYDFHGELIDEAIVIYFKAPFSFTAEDVVEIQCHGGFIVAQSILKTTLLHGARLATAGEFSKRAFFNGRIDLSKAEAIAQLIEAKSEDAAKILAQQMKGSLKEYVEKIRDDLIHILAYSEVSIDYAEEDLPEDLVMQIQAKLKELKTSLNKTLQASKAREGLMQGFKVAIIGKPNVGKSSLLNALLNYNRAIVSDIAGTTRDTIEEQVKIGTHLIRIVDTAGIREASDEIERIGIERSLEAINESDIVIALFDASRVADYEDEQILSLIESKAGSKNVLHVKNKIDLEEKFYRSSLEFDIEINSKEGVEELILALENIMNQANTSDEMMLISQRQIGAVQNTLNYIDEAFEPLQEQELEIFSFNLNEAIKEIASITRPFENDEMLDKMFGSFCLGK</sequence>
<organism>
    <name type="scientific">Sulfurimonas denitrificans (strain ATCC 33889 / DSM 1251)</name>
    <name type="common">Thiomicrospira denitrificans (strain ATCC 33889 / DSM 1251)</name>
    <dbReference type="NCBI Taxonomy" id="326298"/>
    <lineage>
        <taxon>Bacteria</taxon>
        <taxon>Pseudomonadati</taxon>
        <taxon>Campylobacterota</taxon>
        <taxon>Epsilonproteobacteria</taxon>
        <taxon>Campylobacterales</taxon>
        <taxon>Sulfurimonadaceae</taxon>
        <taxon>Sulfurimonas</taxon>
    </lineage>
</organism>
<proteinExistence type="inferred from homology"/>
<accession>Q30T75</accession>
<evidence type="ECO:0000255" key="1">
    <source>
        <dbReference type="HAMAP-Rule" id="MF_00379"/>
    </source>
</evidence>
<name>MNME_SULDN</name>
<feature type="chain" id="PRO_1000048901" description="tRNA modification GTPase MnmE">
    <location>
        <begin position="1"/>
        <end position="446"/>
    </location>
</feature>
<feature type="domain" description="TrmE-type G">
    <location>
        <begin position="215"/>
        <end position="370"/>
    </location>
</feature>
<feature type="binding site" evidence="1">
    <location>
        <position position="22"/>
    </location>
    <ligand>
        <name>(6S)-5-formyl-5,6,7,8-tetrahydrofolate</name>
        <dbReference type="ChEBI" id="CHEBI:57457"/>
    </ligand>
</feature>
<feature type="binding site" evidence="1">
    <location>
        <position position="80"/>
    </location>
    <ligand>
        <name>(6S)-5-formyl-5,6,7,8-tetrahydrofolate</name>
        <dbReference type="ChEBI" id="CHEBI:57457"/>
    </ligand>
</feature>
<feature type="binding site" evidence="1">
    <location>
        <position position="119"/>
    </location>
    <ligand>
        <name>(6S)-5-formyl-5,6,7,8-tetrahydrofolate</name>
        <dbReference type="ChEBI" id="CHEBI:57457"/>
    </ligand>
</feature>
<feature type="binding site" evidence="1">
    <location>
        <begin position="225"/>
        <end position="230"/>
    </location>
    <ligand>
        <name>GTP</name>
        <dbReference type="ChEBI" id="CHEBI:37565"/>
    </ligand>
</feature>
<feature type="binding site" evidence="1">
    <location>
        <position position="225"/>
    </location>
    <ligand>
        <name>K(+)</name>
        <dbReference type="ChEBI" id="CHEBI:29103"/>
    </ligand>
</feature>
<feature type="binding site" evidence="1">
    <location>
        <position position="229"/>
    </location>
    <ligand>
        <name>Mg(2+)</name>
        <dbReference type="ChEBI" id="CHEBI:18420"/>
    </ligand>
</feature>
<feature type="binding site" evidence="1">
    <location>
        <begin position="244"/>
        <end position="250"/>
    </location>
    <ligand>
        <name>GTP</name>
        <dbReference type="ChEBI" id="CHEBI:37565"/>
    </ligand>
</feature>
<feature type="binding site" evidence="1">
    <location>
        <position position="244"/>
    </location>
    <ligand>
        <name>K(+)</name>
        <dbReference type="ChEBI" id="CHEBI:29103"/>
    </ligand>
</feature>
<feature type="binding site" evidence="1">
    <location>
        <position position="246"/>
    </location>
    <ligand>
        <name>K(+)</name>
        <dbReference type="ChEBI" id="CHEBI:29103"/>
    </ligand>
</feature>
<feature type="binding site" evidence="1">
    <location>
        <position position="249"/>
    </location>
    <ligand>
        <name>K(+)</name>
        <dbReference type="ChEBI" id="CHEBI:29103"/>
    </ligand>
</feature>
<feature type="binding site" evidence="1">
    <location>
        <position position="250"/>
    </location>
    <ligand>
        <name>Mg(2+)</name>
        <dbReference type="ChEBI" id="CHEBI:18420"/>
    </ligand>
</feature>
<feature type="binding site" evidence="1">
    <location>
        <begin position="269"/>
        <end position="272"/>
    </location>
    <ligand>
        <name>GTP</name>
        <dbReference type="ChEBI" id="CHEBI:37565"/>
    </ligand>
</feature>
<feature type="binding site" evidence="1">
    <location>
        <position position="446"/>
    </location>
    <ligand>
        <name>(6S)-5-formyl-5,6,7,8-tetrahydrofolate</name>
        <dbReference type="ChEBI" id="CHEBI:57457"/>
    </ligand>
</feature>
<comment type="function">
    <text evidence="1">Exhibits a very high intrinsic GTPase hydrolysis rate. Involved in the addition of a carboxymethylaminomethyl (cmnm) group at the wobble position (U34) of certain tRNAs, forming tRNA-cmnm(5)s(2)U34.</text>
</comment>
<comment type="cofactor">
    <cofactor evidence="1">
        <name>K(+)</name>
        <dbReference type="ChEBI" id="CHEBI:29103"/>
    </cofactor>
    <text evidence="1">Binds 1 potassium ion per subunit.</text>
</comment>
<comment type="subunit">
    <text evidence="1">Homodimer. Heterotetramer of two MnmE and two MnmG subunits.</text>
</comment>
<comment type="subcellular location">
    <subcellularLocation>
        <location evidence="1">Cytoplasm</location>
    </subcellularLocation>
</comment>
<comment type="similarity">
    <text evidence="1">Belongs to the TRAFAC class TrmE-Era-EngA-EngB-Septin-like GTPase superfamily. TrmE GTPase family.</text>
</comment>
<protein>
    <recommendedName>
        <fullName evidence="1">tRNA modification GTPase MnmE</fullName>
        <ecNumber evidence="1">3.6.-.-</ecNumber>
    </recommendedName>
</protein>